<name>RSMG_ECO45</name>
<accession>B7MGG0</accession>
<sequence length="207" mass="23431">MLNKLSLLLKDAGISLTDHQKNQLIAYVNMLHKWNKAYNLTSVRDPNEMLVRHILDSIVVAPYLQGERFIDVGTGPGLPGIPLSIVRPEAHFTLLDSLGKRVRFLRQVQHELKLENIEPVQSRVEEFPSEPPFDGVISRAFASLNDMVSWCHHLPGEQGRFYALKGQMPEDEIALLPEEYQVESVVKLQVPALDGERHLVVIKANKI</sequence>
<keyword id="KW-0963">Cytoplasm</keyword>
<keyword id="KW-0489">Methyltransferase</keyword>
<keyword id="KW-1185">Reference proteome</keyword>
<keyword id="KW-0698">rRNA processing</keyword>
<keyword id="KW-0949">S-adenosyl-L-methionine</keyword>
<keyword id="KW-0808">Transferase</keyword>
<dbReference type="EC" id="2.1.1.170" evidence="1"/>
<dbReference type="EMBL" id="CU928161">
    <property type="protein sequence ID" value="CAR05368.1"/>
    <property type="molecule type" value="Genomic_DNA"/>
</dbReference>
<dbReference type="RefSeq" id="WP_000932839.1">
    <property type="nucleotide sequence ID" value="NC_011742.1"/>
</dbReference>
<dbReference type="SMR" id="B7MGG0"/>
<dbReference type="GeneID" id="93778227"/>
<dbReference type="KEGG" id="ecz:ECS88_4162"/>
<dbReference type="HOGENOM" id="CLU_065341_2_2_6"/>
<dbReference type="Proteomes" id="UP000000747">
    <property type="component" value="Chromosome"/>
</dbReference>
<dbReference type="GO" id="GO:0005829">
    <property type="term" value="C:cytosol"/>
    <property type="evidence" value="ECO:0007669"/>
    <property type="project" value="TreeGrafter"/>
</dbReference>
<dbReference type="GO" id="GO:0070043">
    <property type="term" value="F:rRNA (guanine-N7-)-methyltransferase activity"/>
    <property type="evidence" value="ECO:0007669"/>
    <property type="project" value="UniProtKB-UniRule"/>
</dbReference>
<dbReference type="CDD" id="cd02440">
    <property type="entry name" value="AdoMet_MTases"/>
    <property type="match status" value="1"/>
</dbReference>
<dbReference type="FunFam" id="3.40.50.150:FF:000032">
    <property type="entry name" value="Ribosomal RNA small subunit methyltransferase G"/>
    <property type="match status" value="1"/>
</dbReference>
<dbReference type="Gene3D" id="3.40.50.150">
    <property type="entry name" value="Vaccinia Virus protein VP39"/>
    <property type="match status" value="1"/>
</dbReference>
<dbReference type="HAMAP" id="MF_00074">
    <property type="entry name" value="16SrRNA_methyltr_G"/>
    <property type="match status" value="1"/>
</dbReference>
<dbReference type="InterPro" id="IPR003682">
    <property type="entry name" value="rRNA_ssu_MeTfrase_G"/>
</dbReference>
<dbReference type="InterPro" id="IPR029063">
    <property type="entry name" value="SAM-dependent_MTases_sf"/>
</dbReference>
<dbReference type="NCBIfam" id="TIGR00138">
    <property type="entry name" value="rsmG_gidB"/>
    <property type="match status" value="1"/>
</dbReference>
<dbReference type="PANTHER" id="PTHR31760">
    <property type="entry name" value="S-ADENOSYL-L-METHIONINE-DEPENDENT METHYLTRANSFERASES SUPERFAMILY PROTEIN"/>
    <property type="match status" value="1"/>
</dbReference>
<dbReference type="PANTHER" id="PTHR31760:SF0">
    <property type="entry name" value="S-ADENOSYL-L-METHIONINE-DEPENDENT METHYLTRANSFERASES SUPERFAMILY PROTEIN"/>
    <property type="match status" value="1"/>
</dbReference>
<dbReference type="Pfam" id="PF02527">
    <property type="entry name" value="GidB"/>
    <property type="match status" value="1"/>
</dbReference>
<dbReference type="PIRSF" id="PIRSF003078">
    <property type="entry name" value="GidB"/>
    <property type="match status" value="1"/>
</dbReference>
<dbReference type="SUPFAM" id="SSF53335">
    <property type="entry name" value="S-adenosyl-L-methionine-dependent methyltransferases"/>
    <property type="match status" value="1"/>
</dbReference>
<protein>
    <recommendedName>
        <fullName evidence="1">Ribosomal RNA small subunit methyltransferase G</fullName>
        <ecNumber evidence="1">2.1.1.170</ecNumber>
    </recommendedName>
    <alternativeName>
        <fullName evidence="1">16S rRNA 7-methylguanosine methyltransferase</fullName>
        <shortName evidence="1">16S rRNA m7G methyltransferase</shortName>
    </alternativeName>
</protein>
<comment type="function">
    <text evidence="1">Specifically methylates the N7 position of guanine in position 527 of 16S rRNA.</text>
</comment>
<comment type="catalytic activity">
    <reaction evidence="1">
        <text>guanosine(527) in 16S rRNA + S-adenosyl-L-methionine = N(7)-methylguanosine(527) in 16S rRNA + S-adenosyl-L-homocysteine</text>
        <dbReference type="Rhea" id="RHEA:42732"/>
        <dbReference type="Rhea" id="RHEA-COMP:10209"/>
        <dbReference type="Rhea" id="RHEA-COMP:10210"/>
        <dbReference type="ChEBI" id="CHEBI:57856"/>
        <dbReference type="ChEBI" id="CHEBI:59789"/>
        <dbReference type="ChEBI" id="CHEBI:74269"/>
        <dbReference type="ChEBI" id="CHEBI:74480"/>
        <dbReference type="EC" id="2.1.1.170"/>
    </reaction>
</comment>
<comment type="subcellular location">
    <subcellularLocation>
        <location evidence="1">Cytoplasm</location>
    </subcellularLocation>
</comment>
<comment type="similarity">
    <text evidence="1">Belongs to the methyltransferase superfamily. RNA methyltransferase RsmG family.</text>
</comment>
<proteinExistence type="inferred from homology"/>
<evidence type="ECO:0000255" key="1">
    <source>
        <dbReference type="HAMAP-Rule" id="MF_00074"/>
    </source>
</evidence>
<feature type="chain" id="PRO_1000117066" description="Ribosomal RNA small subunit methyltransferase G">
    <location>
        <begin position="1"/>
        <end position="207"/>
    </location>
</feature>
<feature type="binding site" evidence="1">
    <location>
        <position position="73"/>
    </location>
    <ligand>
        <name>S-adenosyl-L-methionine</name>
        <dbReference type="ChEBI" id="CHEBI:59789"/>
    </ligand>
</feature>
<feature type="binding site" evidence="1">
    <location>
        <position position="78"/>
    </location>
    <ligand>
        <name>S-adenosyl-L-methionine</name>
        <dbReference type="ChEBI" id="CHEBI:59789"/>
    </ligand>
</feature>
<feature type="binding site" evidence="1">
    <location>
        <begin position="124"/>
        <end position="125"/>
    </location>
    <ligand>
        <name>S-adenosyl-L-methionine</name>
        <dbReference type="ChEBI" id="CHEBI:59789"/>
    </ligand>
</feature>
<feature type="binding site" evidence="1">
    <location>
        <position position="139"/>
    </location>
    <ligand>
        <name>S-adenosyl-L-methionine</name>
        <dbReference type="ChEBI" id="CHEBI:59789"/>
    </ligand>
</feature>
<reference key="1">
    <citation type="journal article" date="2009" name="PLoS Genet.">
        <title>Organised genome dynamics in the Escherichia coli species results in highly diverse adaptive paths.</title>
        <authorList>
            <person name="Touchon M."/>
            <person name="Hoede C."/>
            <person name="Tenaillon O."/>
            <person name="Barbe V."/>
            <person name="Baeriswyl S."/>
            <person name="Bidet P."/>
            <person name="Bingen E."/>
            <person name="Bonacorsi S."/>
            <person name="Bouchier C."/>
            <person name="Bouvet O."/>
            <person name="Calteau A."/>
            <person name="Chiapello H."/>
            <person name="Clermont O."/>
            <person name="Cruveiller S."/>
            <person name="Danchin A."/>
            <person name="Diard M."/>
            <person name="Dossat C."/>
            <person name="Karoui M.E."/>
            <person name="Frapy E."/>
            <person name="Garry L."/>
            <person name="Ghigo J.M."/>
            <person name="Gilles A.M."/>
            <person name="Johnson J."/>
            <person name="Le Bouguenec C."/>
            <person name="Lescat M."/>
            <person name="Mangenot S."/>
            <person name="Martinez-Jehanne V."/>
            <person name="Matic I."/>
            <person name="Nassif X."/>
            <person name="Oztas S."/>
            <person name="Petit M.A."/>
            <person name="Pichon C."/>
            <person name="Rouy Z."/>
            <person name="Ruf C.S."/>
            <person name="Schneider D."/>
            <person name="Tourret J."/>
            <person name="Vacherie B."/>
            <person name="Vallenet D."/>
            <person name="Medigue C."/>
            <person name="Rocha E.P.C."/>
            <person name="Denamur E."/>
        </authorList>
    </citation>
    <scope>NUCLEOTIDE SEQUENCE [LARGE SCALE GENOMIC DNA]</scope>
    <source>
        <strain>S88 / ExPEC</strain>
    </source>
</reference>
<gene>
    <name evidence="1" type="primary">rsmG</name>
    <name type="ordered locus">ECS88_4162</name>
</gene>
<organism>
    <name type="scientific">Escherichia coli O45:K1 (strain S88 / ExPEC)</name>
    <dbReference type="NCBI Taxonomy" id="585035"/>
    <lineage>
        <taxon>Bacteria</taxon>
        <taxon>Pseudomonadati</taxon>
        <taxon>Pseudomonadota</taxon>
        <taxon>Gammaproteobacteria</taxon>
        <taxon>Enterobacterales</taxon>
        <taxon>Enterobacteriaceae</taxon>
        <taxon>Escherichia</taxon>
    </lineage>
</organism>